<dbReference type="EC" id="2.7.7.18" evidence="1"/>
<dbReference type="EMBL" id="CP000267">
    <property type="protein sequence ID" value="ABD69803.1"/>
    <property type="molecule type" value="Genomic_DNA"/>
</dbReference>
<dbReference type="RefSeq" id="WP_011464371.1">
    <property type="nucleotide sequence ID" value="NC_007908.1"/>
</dbReference>
<dbReference type="SMR" id="Q21WQ0"/>
<dbReference type="STRING" id="338969.Rfer_2078"/>
<dbReference type="KEGG" id="rfr:Rfer_2078"/>
<dbReference type="eggNOG" id="COG1057">
    <property type="taxonomic scope" value="Bacteria"/>
</dbReference>
<dbReference type="HOGENOM" id="CLU_069765_3_1_4"/>
<dbReference type="OrthoDB" id="5295945at2"/>
<dbReference type="UniPathway" id="UPA00253">
    <property type="reaction ID" value="UER00332"/>
</dbReference>
<dbReference type="Proteomes" id="UP000008332">
    <property type="component" value="Chromosome"/>
</dbReference>
<dbReference type="GO" id="GO:0005524">
    <property type="term" value="F:ATP binding"/>
    <property type="evidence" value="ECO:0007669"/>
    <property type="project" value="UniProtKB-KW"/>
</dbReference>
<dbReference type="GO" id="GO:0004515">
    <property type="term" value="F:nicotinate-nucleotide adenylyltransferase activity"/>
    <property type="evidence" value="ECO:0007669"/>
    <property type="project" value="UniProtKB-UniRule"/>
</dbReference>
<dbReference type="GO" id="GO:0009435">
    <property type="term" value="P:NAD biosynthetic process"/>
    <property type="evidence" value="ECO:0007669"/>
    <property type="project" value="UniProtKB-UniRule"/>
</dbReference>
<dbReference type="CDD" id="cd02165">
    <property type="entry name" value="NMNAT"/>
    <property type="match status" value="1"/>
</dbReference>
<dbReference type="Gene3D" id="3.40.50.620">
    <property type="entry name" value="HUPs"/>
    <property type="match status" value="1"/>
</dbReference>
<dbReference type="HAMAP" id="MF_00244">
    <property type="entry name" value="NaMN_adenylyltr"/>
    <property type="match status" value="1"/>
</dbReference>
<dbReference type="InterPro" id="IPR004821">
    <property type="entry name" value="Cyt_trans-like"/>
</dbReference>
<dbReference type="InterPro" id="IPR005248">
    <property type="entry name" value="NadD/NMNAT"/>
</dbReference>
<dbReference type="InterPro" id="IPR014729">
    <property type="entry name" value="Rossmann-like_a/b/a_fold"/>
</dbReference>
<dbReference type="NCBIfam" id="TIGR00482">
    <property type="entry name" value="nicotinate (nicotinamide) nucleotide adenylyltransferase"/>
    <property type="match status" value="1"/>
</dbReference>
<dbReference type="NCBIfam" id="NF000840">
    <property type="entry name" value="PRK00071.1-3"/>
    <property type="match status" value="1"/>
</dbReference>
<dbReference type="PANTHER" id="PTHR39321">
    <property type="entry name" value="NICOTINATE-NUCLEOTIDE ADENYLYLTRANSFERASE-RELATED"/>
    <property type="match status" value="1"/>
</dbReference>
<dbReference type="PANTHER" id="PTHR39321:SF3">
    <property type="entry name" value="PHOSPHOPANTETHEINE ADENYLYLTRANSFERASE"/>
    <property type="match status" value="1"/>
</dbReference>
<dbReference type="Pfam" id="PF01467">
    <property type="entry name" value="CTP_transf_like"/>
    <property type="match status" value="1"/>
</dbReference>
<dbReference type="SUPFAM" id="SSF52374">
    <property type="entry name" value="Nucleotidylyl transferase"/>
    <property type="match status" value="1"/>
</dbReference>
<organism>
    <name type="scientific">Albidiferax ferrireducens (strain ATCC BAA-621 / DSM 15236 / T118)</name>
    <name type="common">Rhodoferax ferrireducens</name>
    <dbReference type="NCBI Taxonomy" id="338969"/>
    <lineage>
        <taxon>Bacteria</taxon>
        <taxon>Pseudomonadati</taxon>
        <taxon>Pseudomonadota</taxon>
        <taxon>Betaproteobacteria</taxon>
        <taxon>Burkholderiales</taxon>
        <taxon>Comamonadaceae</taxon>
        <taxon>Rhodoferax</taxon>
    </lineage>
</organism>
<evidence type="ECO:0000255" key="1">
    <source>
        <dbReference type="HAMAP-Rule" id="MF_00244"/>
    </source>
</evidence>
<gene>
    <name evidence="1" type="primary">nadD</name>
    <name type="ordered locus">Rfer_2078</name>
</gene>
<reference key="1">
    <citation type="submission" date="2006-02" db="EMBL/GenBank/DDBJ databases">
        <title>Complete sequence of chromosome of Rhodoferax ferrireducens DSM 15236.</title>
        <authorList>
            <person name="Copeland A."/>
            <person name="Lucas S."/>
            <person name="Lapidus A."/>
            <person name="Barry K."/>
            <person name="Detter J.C."/>
            <person name="Glavina del Rio T."/>
            <person name="Hammon N."/>
            <person name="Israni S."/>
            <person name="Pitluck S."/>
            <person name="Brettin T."/>
            <person name="Bruce D."/>
            <person name="Han C."/>
            <person name="Tapia R."/>
            <person name="Gilna P."/>
            <person name="Kiss H."/>
            <person name="Schmutz J."/>
            <person name="Larimer F."/>
            <person name="Land M."/>
            <person name="Kyrpides N."/>
            <person name="Ivanova N."/>
            <person name="Richardson P."/>
        </authorList>
    </citation>
    <scope>NUCLEOTIDE SEQUENCE [LARGE SCALE GENOMIC DNA]</scope>
    <source>
        <strain>ATCC BAA-621 / DSM 15236 / T118</strain>
    </source>
</reference>
<feature type="chain" id="PRO_0000310137" description="Probable nicotinate-nucleotide adenylyltransferase">
    <location>
        <begin position="1"/>
        <end position="198"/>
    </location>
</feature>
<name>NADD_ALBFT</name>
<accession>Q21WQ0</accession>
<proteinExistence type="inferred from homology"/>
<protein>
    <recommendedName>
        <fullName evidence="1">Probable nicotinate-nucleotide adenylyltransferase</fullName>
        <ecNumber evidence="1">2.7.7.18</ecNumber>
    </recommendedName>
    <alternativeName>
        <fullName evidence="1">Deamido-NAD(+) diphosphorylase</fullName>
    </alternativeName>
    <alternativeName>
        <fullName evidence="1">Deamido-NAD(+) pyrophosphorylase</fullName>
    </alternativeName>
    <alternativeName>
        <fullName evidence="1">Nicotinate mononucleotide adenylyltransferase</fullName>
        <shortName evidence="1">NaMN adenylyltransferase</shortName>
    </alternativeName>
</protein>
<comment type="function">
    <text evidence="1">Catalyzes the reversible adenylation of nicotinate mononucleotide (NaMN) to nicotinic acid adenine dinucleotide (NaAD).</text>
</comment>
<comment type="catalytic activity">
    <reaction evidence="1">
        <text>nicotinate beta-D-ribonucleotide + ATP + H(+) = deamido-NAD(+) + diphosphate</text>
        <dbReference type="Rhea" id="RHEA:22860"/>
        <dbReference type="ChEBI" id="CHEBI:15378"/>
        <dbReference type="ChEBI" id="CHEBI:30616"/>
        <dbReference type="ChEBI" id="CHEBI:33019"/>
        <dbReference type="ChEBI" id="CHEBI:57502"/>
        <dbReference type="ChEBI" id="CHEBI:58437"/>
        <dbReference type="EC" id="2.7.7.18"/>
    </reaction>
</comment>
<comment type="pathway">
    <text evidence="1">Cofactor biosynthesis; NAD(+) biosynthesis; deamido-NAD(+) from nicotinate D-ribonucleotide: step 1/1.</text>
</comment>
<comment type="similarity">
    <text evidence="1">Belongs to the NadD family.</text>
</comment>
<sequence length="198" mass="22045">MKRIGVFGGAFDPPHVAHAALVKAALAELQLDELRVVPTGEAWHKTRTLSPAPHRLAMAQLAFAELPHVVVDPRELERVGPSYTVDTLREFKALWPTAEFFLILGEDQAQALPSWHDWQEILQLAIICVATRACSTGAGAKFDLETTHKSRFRRLLMPALNVSATDIRARFAAHLSVADMVFEPVARYIAHHHLYQTA</sequence>
<keyword id="KW-0067">ATP-binding</keyword>
<keyword id="KW-0520">NAD</keyword>
<keyword id="KW-0547">Nucleotide-binding</keyword>
<keyword id="KW-0548">Nucleotidyltransferase</keyword>
<keyword id="KW-0662">Pyridine nucleotide biosynthesis</keyword>
<keyword id="KW-1185">Reference proteome</keyword>
<keyword id="KW-0808">Transferase</keyword>